<keyword id="KW-0997">Cell inner membrane</keyword>
<keyword id="KW-1003">Cell membrane</keyword>
<keyword id="KW-0406">Ion transport</keyword>
<keyword id="KW-0472">Membrane</keyword>
<keyword id="KW-1185">Reference proteome</keyword>
<keyword id="KW-0812">Transmembrane</keyword>
<keyword id="KW-1133">Transmembrane helix</keyword>
<keyword id="KW-0813">Transport</keyword>
<protein>
    <recommendedName>
        <fullName evidence="1">Guanidinium exporter</fullName>
    </recommendedName>
</protein>
<gene>
    <name evidence="1" type="primary">gdx</name>
    <name type="synonym">sugE</name>
    <name type="ordered locus">SF4306</name>
    <name type="ordered locus">S4571</name>
</gene>
<feature type="chain" id="PRO_0000108107" description="Guanidinium exporter">
    <location>
        <begin position="1"/>
        <end position="105"/>
    </location>
</feature>
<feature type="transmembrane region" description="Helical" evidence="2">
    <location>
        <begin position="1"/>
        <end position="21"/>
    </location>
</feature>
<feature type="topological domain" description="Cytoplasmic" evidence="2">
    <location>
        <begin position="22"/>
        <end position="28"/>
    </location>
</feature>
<feature type="transmembrane region" description="Helical" evidence="2">
    <location>
        <begin position="29"/>
        <end position="49"/>
    </location>
</feature>
<feature type="topological domain" description="Periplasmic" evidence="2">
    <location>
        <begin position="50"/>
        <end position="57"/>
    </location>
</feature>
<feature type="transmembrane region" description="Helical" evidence="2">
    <location>
        <begin position="58"/>
        <end position="78"/>
    </location>
</feature>
<feature type="topological domain" description="Cytoplasmic" evidence="2">
    <location>
        <begin position="79"/>
        <end position="81"/>
    </location>
</feature>
<feature type="transmembrane region" description="Helical" evidence="2">
    <location>
        <begin position="82"/>
        <end position="102"/>
    </location>
</feature>
<feature type="topological domain" description="Periplasmic" evidence="2">
    <location>
        <begin position="103"/>
        <end position="105"/>
    </location>
</feature>
<sequence>MSWIILVIAGLLEVVWAVGLKYTHGFSRLTPSVITVTAMIVSMALLAWAMKSLPVGTAYAVWTGIGAVGAAITGIVLLGESANPMRLASLALIVLGIIGLKLSTH</sequence>
<name>GDX_SHIFL</name>
<accession>P69938</accession>
<accession>P30743</accession>
<evidence type="ECO:0000250" key="1">
    <source>
        <dbReference type="UniProtKB" id="P69937"/>
    </source>
</evidence>
<evidence type="ECO:0000255" key="2"/>
<evidence type="ECO:0000305" key="3"/>
<organism>
    <name type="scientific">Shigella flexneri</name>
    <dbReference type="NCBI Taxonomy" id="623"/>
    <lineage>
        <taxon>Bacteria</taxon>
        <taxon>Pseudomonadati</taxon>
        <taxon>Pseudomonadota</taxon>
        <taxon>Gammaproteobacteria</taxon>
        <taxon>Enterobacterales</taxon>
        <taxon>Enterobacteriaceae</taxon>
        <taxon>Shigella</taxon>
    </lineage>
</organism>
<proteinExistence type="inferred from homology"/>
<reference key="1">
    <citation type="journal article" date="2002" name="Nucleic Acids Res.">
        <title>Genome sequence of Shigella flexneri 2a: insights into pathogenicity through comparison with genomes of Escherichia coli K12 and O157.</title>
        <authorList>
            <person name="Jin Q."/>
            <person name="Yuan Z."/>
            <person name="Xu J."/>
            <person name="Wang Y."/>
            <person name="Shen Y."/>
            <person name="Lu W."/>
            <person name="Wang J."/>
            <person name="Liu H."/>
            <person name="Yang J."/>
            <person name="Yang F."/>
            <person name="Zhang X."/>
            <person name="Zhang J."/>
            <person name="Yang G."/>
            <person name="Wu H."/>
            <person name="Qu D."/>
            <person name="Dong J."/>
            <person name="Sun L."/>
            <person name="Xue Y."/>
            <person name="Zhao A."/>
            <person name="Gao Y."/>
            <person name="Zhu J."/>
            <person name="Kan B."/>
            <person name="Ding K."/>
            <person name="Chen S."/>
            <person name="Cheng H."/>
            <person name="Yao Z."/>
            <person name="He B."/>
            <person name="Chen R."/>
            <person name="Ma D."/>
            <person name="Qiang B."/>
            <person name="Wen Y."/>
            <person name="Hou Y."/>
            <person name="Yu J."/>
        </authorList>
    </citation>
    <scope>NUCLEOTIDE SEQUENCE [LARGE SCALE GENOMIC DNA]</scope>
    <source>
        <strain>301 / Serotype 2a</strain>
    </source>
</reference>
<reference key="2">
    <citation type="journal article" date="2003" name="Infect. Immun.">
        <title>Complete genome sequence and comparative genomics of Shigella flexneri serotype 2a strain 2457T.</title>
        <authorList>
            <person name="Wei J."/>
            <person name="Goldberg M.B."/>
            <person name="Burland V."/>
            <person name="Venkatesan M.M."/>
            <person name="Deng W."/>
            <person name="Fournier G."/>
            <person name="Mayhew G.F."/>
            <person name="Plunkett G. III"/>
            <person name="Rose D.J."/>
            <person name="Darling A."/>
            <person name="Mau B."/>
            <person name="Perna N.T."/>
            <person name="Payne S.M."/>
            <person name="Runyen-Janecky L.J."/>
            <person name="Zhou S."/>
            <person name="Schwartz D.C."/>
            <person name="Blattner F.R."/>
        </authorList>
    </citation>
    <scope>NUCLEOTIDE SEQUENCE [LARGE SCALE GENOMIC DNA]</scope>
    <source>
        <strain>ATCC 700930 / 2457T / Serotype 2a</strain>
    </source>
</reference>
<dbReference type="EMBL" id="AE005674">
    <property type="protein sequence ID" value="AAN45724.2"/>
    <property type="status" value="ALT_INIT"/>
    <property type="molecule type" value="Genomic_DNA"/>
</dbReference>
<dbReference type="EMBL" id="AE014073">
    <property type="protein sequence ID" value="AAP19508.1"/>
    <property type="status" value="ALT_INIT"/>
    <property type="molecule type" value="Genomic_DNA"/>
</dbReference>
<dbReference type="RefSeq" id="NP_710017.2">
    <property type="nucleotide sequence ID" value="NC_004337.2"/>
</dbReference>
<dbReference type="RefSeq" id="WP_000118482.1">
    <property type="nucleotide sequence ID" value="NZ_WPGW01000002.1"/>
</dbReference>
<dbReference type="SMR" id="P69938"/>
<dbReference type="STRING" id="198214.SF4306"/>
<dbReference type="PaxDb" id="198214-SF4306"/>
<dbReference type="DNASU" id="1080779"/>
<dbReference type="GeneID" id="1027607"/>
<dbReference type="GeneID" id="93777674"/>
<dbReference type="KEGG" id="sfl:SF4306"/>
<dbReference type="KEGG" id="sfx:S4571"/>
<dbReference type="PATRIC" id="fig|198214.7.peg.5077"/>
<dbReference type="HOGENOM" id="CLU_133067_1_1_6"/>
<dbReference type="Proteomes" id="UP000001006">
    <property type="component" value="Chromosome"/>
</dbReference>
<dbReference type="Proteomes" id="UP000002673">
    <property type="component" value="Chromosome"/>
</dbReference>
<dbReference type="GO" id="GO:0005886">
    <property type="term" value="C:plasma membrane"/>
    <property type="evidence" value="ECO:0007669"/>
    <property type="project" value="UniProtKB-SubCell"/>
</dbReference>
<dbReference type="GO" id="GO:0022857">
    <property type="term" value="F:transmembrane transporter activity"/>
    <property type="evidence" value="ECO:0007669"/>
    <property type="project" value="InterPro"/>
</dbReference>
<dbReference type="GO" id="GO:0006811">
    <property type="term" value="P:monoatomic ion transport"/>
    <property type="evidence" value="ECO:0007669"/>
    <property type="project" value="UniProtKB-KW"/>
</dbReference>
<dbReference type="FunFam" id="1.10.3730.20:FF:000001">
    <property type="entry name" value="Quaternary ammonium compound resistance transporter SugE"/>
    <property type="match status" value="1"/>
</dbReference>
<dbReference type="Gene3D" id="1.10.3730.20">
    <property type="match status" value="1"/>
</dbReference>
<dbReference type="InterPro" id="IPR000390">
    <property type="entry name" value="Small_drug/metabolite_transptr"/>
</dbReference>
<dbReference type="InterPro" id="IPR045324">
    <property type="entry name" value="Small_multidrug_res"/>
</dbReference>
<dbReference type="NCBIfam" id="NF008512">
    <property type="entry name" value="PRK11431.1"/>
    <property type="match status" value="1"/>
</dbReference>
<dbReference type="PANTHER" id="PTHR30561:SF0">
    <property type="entry name" value="GUANIDINIUM EXPORTER"/>
    <property type="match status" value="1"/>
</dbReference>
<dbReference type="PANTHER" id="PTHR30561">
    <property type="entry name" value="SMR FAMILY PROTON-DEPENDENT DRUG EFFLUX TRANSPORTER SUGE"/>
    <property type="match status" value="1"/>
</dbReference>
<dbReference type="Pfam" id="PF00893">
    <property type="entry name" value="Multi_Drug_Res"/>
    <property type="match status" value="1"/>
</dbReference>
<dbReference type="SUPFAM" id="SSF103481">
    <property type="entry name" value="Multidrug resistance efflux transporter EmrE"/>
    <property type="match status" value="1"/>
</dbReference>
<comment type="function">
    <text evidence="1">Guanidinium ion exporter. Couples guanidinium export to the proton motive force, exchanging one guanidinium ion for two protons.</text>
</comment>
<comment type="subcellular location">
    <subcellularLocation>
        <location evidence="1">Cell inner membrane</location>
        <topology evidence="1">Multi-pass membrane protein</topology>
    </subcellularLocation>
</comment>
<comment type="similarity">
    <text evidence="3">Belongs to the drug/metabolite transporter (DMT) superfamily. Small multidrug resistance (SMR) (TC 2.A.7.1) family. Gdx/SugE subfamily.</text>
</comment>
<comment type="sequence caution" evidence="3">
    <conflict type="erroneous initiation">
        <sequence resource="EMBL-CDS" id="AAN45724"/>
    </conflict>
    <text>Extended N-terminus.</text>
</comment>
<comment type="sequence caution" evidence="3">
    <conflict type="erroneous initiation">
        <sequence resource="EMBL-CDS" id="AAP19508"/>
    </conflict>
    <text>Extended N-terminus.</text>
</comment>